<name>NPD1_PYRAE</name>
<comment type="function">
    <text evidence="1">NAD-dependent protein deacetylase which modulates the activities of several enzymes which are inactive in their acetylated form. Deacetylates the N-terminal lysine residue of Alba, the major archaeal chromatin protein and that, in turn, increases Alba's DNA binding affinity, thereby repressing transcription.</text>
</comment>
<comment type="catalytic activity">
    <reaction evidence="1">
        <text>N(6)-acetyl-L-lysyl-[protein] + NAD(+) + H2O = 2''-O-acetyl-ADP-D-ribose + nicotinamide + L-lysyl-[protein]</text>
        <dbReference type="Rhea" id="RHEA:43636"/>
        <dbReference type="Rhea" id="RHEA-COMP:9752"/>
        <dbReference type="Rhea" id="RHEA-COMP:10731"/>
        <dbReference type="ChEBI" id="CHEBI:15377"/>
        <dbReference type="ChEBI" id="CHEBI:17154"/>
        <dbReference type="ChEBI" id="CHEBI:29969"/>
        <dbReference type="ChEBI" id="CHEBI:57540"/>
        <dbReference type="ChEBI" id="CHEBI:61930"/>
        <dbReference type="ChEBI" id="CHEBI:83767"/>
        <dbReference type="EC" id="2.3.1.286"/>
    </reaction>
</comment>
<comment type="cofactor">
    <cofactor evidence="1">
        <name>Zn(2+)</name>
        <dbReference type="ChEBI" id="CHEBI:29105"/>
    </cofactor>
    <text evidence="1">Binds 1 zinc ion per subunit.</text>
</comment>
<comment type="subcellular location">
    <subcellularLocation>
        <location evidence="1">Cytoplasm</location>
    </subcellularLocation>
</comment>
<comment type="similarity">
    <text evidence="1">Belongs to the sirtuin family. Class U subfamily.</text>
</comment>
<sequence length="254" mass="28086">MAVDFTTDELDEVASLIARSSCNVALTGAGVSTASGIPDFRGPQGVWRRVDPEKFEISYFYNNPDEVWDLFVKYLLPAFNVKPNPAHYALAEMERLGKLCAVITQNVDRLHQAAGSKNVIELHGALEYAVCTNCGSKYALAEALKWRKSGAPRCPKCGGVIKPDVVFFGEPLPQDALREAFMLAEMAEVFMAIGTSLAVYPANQLPLVAKKRGAKLVIINADETYYDFFADYIIRGRAEEVLPKLLDRLRGMLF</sequence>
<accession>Q8ZU41</accession>
<protein>
    <recommendedName>
        <fullName evidence="1">NAD-dependent protein deacetylase 1</fullName>
        <ecNumber evidence="1 2">2.3.1.286</ecNumber>
    </recommendedName>
    <alternativeName>
        <fullName evidence="1">Regulatory protein SIR2 homolog 1</fullName>
    </alternativeName>
</protein>
<gene>
    <name evidence="1" type="primary">cobB1</name>
    <name type="ordered locus">PAE2959</name>
</gene>
<organism>
    <name type="scientific">Pyrobaculum aerophilum (strain ATCC 51768 / DSM 7523 / JCM 9630 / CIP 104966 / NBRC 100827 / IM2)</name>
    <dbReference type="NCBI Taxonomy" id="178306"/>
    <lineage>
        <taxon>Archaea</taxon>
        <taxon>Thermoproteota</taxon>
        <taxon>Thermoprotei</taxon>
        <taxon>Thermoproteales</taxon>
        <taxon>Thermoproteaceae</taxon>
        <taxon>Pyrobaculum</taxon>
    </lineage>
</organism>
<keyword id="KW-0963">Cytoplasm</keyword>
<keyword id="KW-0479">Metal-binding</keyword>
<keyword id="KW-0520">NAD</keyword>
<keyword id="KW-1185">Reference proteome</keyword>
<keyword id="KW-0804">Transcription</keyword>
<keyword id="KW-0805">Transcription regulation</keyword>
<keyword id="KW-0808">Transferase</keyword>
<keyword id="KW-0862">Zinc</keyword>
<dbReference type="EC" id="2.3.1.286" evidence="1 2"/>
<dbReference type="EMBL" id="AE009441">
    <property type="protein sequence ID" value="AAL64567.1"/>
    <property type="molecule type" value="Genomic_DNA"/>
</dbReference>
<dbReference type="RefSeq" id="WP_011009035.1">
    <property type="nucleotide sequence ID" value="NC_003364.1"/>
</dbReference>
<dbReference type="SMR" id="Q8ZU41"/>
<dbReference type="FunCoup" id="Q8ZU41">
    <property type="interactions" value="91"/>
</dbReference>
<dbReference type="STRING" id="178306.PAE2959"/>
<dbReference type="EnsemblBacteria" id="AAL64567">
    <property type="protein sequence ID" value="AAL64567"/>
    <property type="gene ID" value="PAE2959"/>
</dbReference>
<dbReference type="GeneID" id="1463732"/>
<dbReference type="KEGG" id="pai:PAE2959"/>
<dbReference type="PATRIC" id="fig|178306.9.peg.2218"/>
<dbReference type="eggNOG" id="arCOG04248">
    <property type="taxonomic scope" value="Archaea"/>
</dbReference>
<dbReference type="HOGENOM" id="CLU_023643_3_1_2"/>
<dbReference type="InParanoid" id="Q8ZU41"/>
<dbReference type="Proteomes" id="UP000002439">
    <property type="component" value="Chromosome"/>
</dbReference>
<dbReference type="GO" id="GO:0005737">
    <property type="term" value="C:cytoplasm"/>
    <property type="evidence" value="ECO:0007669"/>
    <property type="project" value="UniProtKB-SubCell"/>
</dbReference>
<dbReference type="GO" id="GO:0017136">
    <property type="term" value="F:histone deacetylase activity, NAD-dependent"/>
    <property type="evidence" value="ECO:0000318"/>
    <property type="project" value="GO_Central"/>
</dbReference>
<dbReference type="GO" id="GO:0070403">
    <property type="term" value="F:NAD+ binding"/>
    <property type="evidence" value="ECO:0000318"/>
    <property type="project" value="GO_Central"/>
</dbReference>
<dbReference type="GO" id="GO:0008270">
    <property type="term" value="F:zinc ion binding"/>
    <property type="evidence" value="ECO:0007669"/>
    <property type="project" value="UniProtKB-UniRule"/>
</dbReference>
<dbReference type="CDD" id="cd01413">
    <property type="entry name" value="SIR2_Af2"/>
    <property type="match status" value="1"/>
</dbReference>
<dbReference type="Gene3D" id="3.30.1600.10">
    <property type="entry name" value="SIR2/SIRT2 'Small Domain"/>
    <property type="match status" value="1"/>
</dbReference>
<dbReference type="Gene3D" id="3.40.50.1220">
    <property type="entry name" value="TPP-binding domain"/>
    <property type="match status" value="1"/>
</dbReference>
<dbReference type="HAMAP" id="MF_01968">
    <property type="entry name" value="Sirtuin_ClassU"/>
    <property type="match status" value="1"/>
</dbReference>
<dbReference type="InterPro" id="IPR029035">
    <property type="entry name" value="DHS-like_NAD/FAD-binding_dom"/>
</dbReference>
<dbReference type="InterPro" id="IPR050134">
    <property type="entry name" value="NAD-dep_sirtuin_deacylases"/>
</dbReference>
<dbReference type="InterPro" id="IPR003000">
    <property type="entry name" value="Sirtuin"/>
</dbReference>
<dbReference type="InterPro" id="IPR026591">
    <property type="entry name" value="Sirtuin_cat_small_dom_sf"/>
</dbReference>
<dbReference type="InterPro" id="IPR028628">
    <property type="entry name" value="Sirtuin_class_U"/>
</dbReference>
<dbReference type="InterPro" id="IPR026590">
    <property type="entry name" value="Ssirtuin_cat_dom"/>
</dbReference>
<dbReference type="NCBIfam" id="NF001753">
    <property type="entry name" value="PRK00481.1-3"/>
    <property type="match status" value="1"/>
</dbReference>
<dbReference type="NCBIfam" id="NF040867">
    <property type="entry name" value="prot_deacyl_CobB"/>
    <property type="match status" value="1"/>
</dbReference>
<dbReference type="PANTHER" id="PTHR11085:SF11">
    <property type="entry name" value="NAD-DEPENDENT PROTEIN DEACETYLASE"/>
    <property type="match status" value="1"/>
</dbReference>
<dbReference type="PANTHER" id="PTHR11085">
    <property type="entry name" value="NAD-DEPENDENT PROTEIN DEACYLASE SIRTUIN-5, MITOCHONDRIAL-RELATED"/>
    <property type="match status" value="1"/>
</dbReference>
<dbReference type="Pfam" id="PF02146">
    <property type="entry name" value="SIR2"/>
    <property type="match status" value="1"/>
</dbReference>
<dbReference type="SUPFAM" id="SSF52467">
    <property type="entry name" value="DHS-like NAD/FAD-binding domain"/>
    <property type="match status" value="1"/>
</dbReference>
<dbReference type="PROSITE" id="PS50305">
    <property type="entry name" value="SIRTUIN"/>
    <property type="match status" value="1"/>
</dbReference>
<evidence type="ECO:0000255" key="1">
    <source>
        <dbReference type="HAMAP-Rule" id="MF_01968"/>
    </source>
</evidence>
<evidence type="ECO:0000255" key="2">
    <source>
        <dbReference type="PROSITE-ProRule" id="PRU00236"/>
    </source>
</evidence>
<feature type="chain" id="PRO_0000110382" description="NAD-dependent protein deacetylase 1">
    <location>
        <begin position="1"/>
        <end position="254"/>
    </location>
</feature>
<feature type="domain" description="Deacetylase sirtuin-type" evidence="2">
    <location>
        <begin position="3"/>
        <end position="252"/>
    </location>
</feature>
<feature type="active site" description="Proton acceptor" evidence="2">
    <location>
        <position position="123"/>
    </location>
</feature>
<feature type="binding site" evidence="1">
    <location>
        <position position="29"/>
    </location>
    <ligand>
        <name>NAD(+)</name>
        <dbReference type="ChEBI" id="CHEBI:57540"/>
    </ligand>
</feature>
<feature type="binding site" evidence="1">
    <location>
        <position position="33"/>
    </location>
    <ligand>
        <name>NAD(+)</name>
        <dbReference type="ChEBI" id="CHEBI:57540"/>
    </ligand>
</feature>
<feature type="binding site" evidence="1">
    <location>
        <position position="40"/>
    </location>
    <ligand>
        <name>NAD(+)</name>
        <dbReference type="ChEBI" id="CHEBI:57540"/>
    </ligand>
</feature>
<feature type="binding site" evidence="1">
    <location>
        <position position="40"/>
    </location>
    <ligand>
        <name>nicotinamide</name>
        <dbReference type="ChEBI" id="CHEBI:17154"/>
    </ligand>
</feature>
<feature type="binding site" evidence="1">
    <location>
        <position position="41"/>
    </location>
    <ligand>
        <name>NAD(+)</name>
        <dbReference type="ChEBI" id="CHEBI:57540"/>
    </ligand>
</feature>
<feature type="binding site" evidence="1">
    <location>
        <position position="105"/>
    </location>
    <ligand>
        <name>NAD(+)</name>
        <dbReference type="ChEBI" id="CHEBI:57540"/>
    </ligand>
</feature>
<feature type="binding site" evidence="1">
    <location>
        <position position="107"/>
    </location>
    <ligand>
        <name>NAD(+)</name>
        <dbReference type="ChEBI" id="CHEBI:57540"/>
    </ligand>
</feature>
<feature type="binding site" evidence="1">
    <location>
        <position position="107"/>
    </location>
    <ligand>
        <name>nicotinamide</name>
        <dbReference type="ChEBI" id="CHEBI:17154"/>
    </ligand>
</feature>
<feature type="binding site" evidence="1">
    <location>
        <position position="108"/>
    </location>
    <ligand>
        <name>NAD(+)</name>
        <dbReference type="ChEBI" id="CHEBI:57540"/>
    </ligand>
</feature>
<feature type="binding site" evidence="1">
    <location>
        <position position="108"/>
    </location>
    <ligand>
        <name>nicotinamide</name>
        <dbReference type="ChEBI" id="CHEBI:17154"/>
    </ligand>
</feature>
<feature type="binding site" evidence="1">
    <location>
        <position position="123"/>
    </location>
    <ligand>
        <name>NAD(+)</name>
        <dbReference type="ChEBI" id="CHEBI:57540"/>
    </ligand>
</feature>
<feature type="binding site" evidence="1">
    <location>
        <position position="131"/>
    </location>
    <ligand>
        <name>Zn(2+)</name>
        <dbReference type="ChEBI" id="CHEBI:29105"/>
    </ligand>
</feature>
<feature type="binding site" evidence="1">
    <location>
        <position position="134"/>
    </location>
    <ligand>
        <name>Zn(2+)</name>
        <dbReference type="ChEBI" id="CHEBI:29105"/>
    </ligand>
</feature>
<feature type="binding site" evidence="1">
    <location>
        <position position="154"/>
    </location>
    <ligand>
        <name>Zn(2+)</name>
        <dbReference type="ChEBI" id="CHEBI:29105"/>
    </ligand>
</feature>
<feature type="binding site" evidence="1">
    <location>
        <position position="157"/>
    </location>
    <ligand>
        <name>Zn(2+)</name>
        <dbReference type="ChEBI" id="CHEBI:29105"/>
    </ligand>
</feature>
<feature type="binding site" evidence="1">
    <location>
        <position position="195"/>
    </location>
    <ligand>
        <name>NAD(+)</name>
        <dbReference type="ChEBI" id="CHEBI:57540"/>
    </ligand>
</feature>
<feature type="binding site" evidence="1">
    <location>
        <position position="196"/>
    </location>
    <ligand>
        <name>NAD(+)</name>
        <dbReference type="ChEBI" id="CHEBI:57540"/>
    </ligand>
</feature>
<feature type="binding site" evidence="1">
    <location>
        <position position="220"/>
    </location>
    <ligand>
        <name>NAD(+)</name>
        <dbReference type="ChEBI" id="CHEBI:57540"/>
    </ligand>
</feature>
<reference key="1">
    <citation type="journal article" date="2002" name="Proc. Natl. Acad. Sci. U.S.A.">
        <title>Genome sequence of the hyperthermophilic crenarchaeon Pyrobaculum aerophilum.</title>
        <authorList>
            <person name="Fitz-Gibbon S.T."/>
            <person name="Ladner H."/>
            <person name="Kim U.-J."/>
            <person name="Stetter K.O."/>
            <person name="Simon M.I."/>
            <person name="Miller J.H."/>
        </authorList>
    </citation>
    <scope>NUCLEOTIDE SEQUENCE [LARGE SCALE GENOMIC DNA]</scope>
    <source>
        <strain>ATCC 51768 / DSM 7523 / JCM 9630 / CIP 104966 / NBRC 100827 / IM2</strain>
    </source>
</reference>
<proteinExistence type="inferred from homology"/>